<comment type="subcellular location">
    <subcellularLocation>
        <location evidence="2">Cytoplasm</location>
    </subcellularLocation>
    <subcellularLocation>
        <location evidence="2">Nucleus</location>
    </subcellularLocation>
</comment>
<comment type="tissue specificity">
    <text evidence="3 4">Expressed in liver and lung with higher expression in brain.</text>
</comment>
<comment type="PTM">
    <text evidence="2">Phosphorylated by CK2 (casein kinase II) in vitro.</text>
</comment>
<comment type="miscellaneous">
    <text>Gene duplication of the ancestral BCNT gene leads to the h-type BCNT (CFDP1) gene and the p97BCNT (CFDP2) gene. The latter contains a region derived from the endonuclease domain of a retrotransposable element RTE-1. This repetitive sequence associated with the BCNT gene is specific to Ruminantia.</text>
</comment>
<sequence>MEEFDSKDISTSKDEDCVPLGGECHEDDINELVKEDEVDGEEETQKTKGTKRKAESILARKRKQGRLSLDQEEEEDASRESGGRIIEKEDAAAEQEKGAESEDARQEEADVLASSVSDAEPKSELPPSTQTKTGEETEETSSSNLVKVEELEKPKKAEEVKLTKSPLAGEEVRFLTQQGRLSGRTSEDEPRRSEGVQHATGEERRADTNTSSKNEAAGQKWKGQSAVDVSGDESKLRCCKEEYCIGTWNVRSMNPGKLDVVKQEMERINIDILGISELKWTGMGELNSDDHYIYYCGQQSLRRNGVALIVNKRVRNAIIGCNLKNDRMISVRFQGKPFNLTVIQVYAPTPYAEEGEVYRFYEDLQHLLEITPKIDVLFIIGDWNAKVGSQEIPGITGRFGLGMQNEAGRRLIEFCHHNRLVITNTLFQQPSRRLYTWTSPDGRYRDQIDYIICRQRWRSSVQSAKTRPGADCGSDHKLLIAKFRLKLKIIPKTTRPFRVTNEEDATNEEAKSVLKQNEKEKPEANVPSTVSSVPGGSGMTKEVGETSQEAKSVFKQDEKDKPQANVPSSVPSLPAGSGPEKCDLEKKKDCNN</sequence>
<dbReference type="EMBL" id="D84513">
    <property type="protein sequence ID" value="BAA20065.1"/>
    <property type="molecule type" value="mRNA"/>
</dbReference>
<dbReference type="EMBL" id="D84514">
    <property type="protein sequence ID" value="BAA20066.1"/>
    <property type="molecule type" value="mRNA"/>
</dbReference>
<dbReference type="EMBL" id="D84515">
    <property type="protein sequence ID" value="BAA20067.1"/>
    <property type="molecule type" value="mRNA"/>
</dbReference>
<dbReference type="EMBL" id="AB081095">
    <property type="protein sequence ID" value="BAC15592.1"/>
    <property type="molecule type" value="Genomic_DNA"/>
</dbReference>
<dbReference type="EMBL" id="AB005652">
    <property type="protein sequence ID" value="BAA21722.1"/>
    <property type="molecule type" value="Genomic_DNA"/>
</dbReference>
<dbReference type="RefSeq" id="NP_777225.1">
    <property type="nucleotide sequence ID" value="NM_174800.2"/>
</dbReference>
<dbReference type="SMR" id="O02751"/>
<dbReference type="STRING" id="9913.ENSBTAP00000012929"/>
<dbReference type="iPTMnet" id="O02751"/>
<dbReference type="PaxDb" id="9913-ENSBTAP00000012929"/>
<dbReference type="PeptideAtlas" id="O02751"/>
<dbReference type="GeneID" id="286876"/>
<dbReference type="KEGG" id="bta:286876"/>
<dbReference type="CTD" id="286876"/>
<dbReference type="eggNOG" id="KOG1075">
    <property type="taxonomic scope" value="Eukaryota"/>
</dbReference>
<dbReference type="eggNOG" id="KOG4776">
    <property type="taxonomic scope" value="Eukaryota"/>
</dbReference>
<dbReference type="InParanoid" id="O02751"/>
<dbReference type="OrthoDB" id="413900at2759"/>
<dbReference type="Proteomes" id="UP000009136">
    <property type="component" value="Unplaced"/>
</dbReference>
<dbReference type="GO" id="GO:0005737">
    <property type="term" value="C:cytoplasm"/>
    <property type="evidence" value="ECO:0007669"/>
    <property type="project" value="UniProtKB-SubCell"/>
</dbReference>
<dbReference type="GO" id="GO:0005634">
    <property type="term" value="C:nucleus"/>
    <property type="evidence" value="ECO:0007669"/>
    <property type="project" value="UniProtKB-SubCell"/>
</dbReference>
<dbReference type="GO" id="GO:0003824">
    <property type="term" value="F:catalytic activity"/>
    <property type="evidence" value="ECO:0007669"/>
    <property type="project" value="InterPro"/>
</dbReference>
<dbReference type="CDD" id="cd09076">
    <property type="entry name" value="L1-EN"/>
    <property type="match status" value="1"/>
</dbReference>
<dbReference type="Gene3D" id="3.60.10.10">
    <property type="entry name" value="Endonuclease/exonuclease/phosphatase"/>
    <property type="match status" value="1"/>
</dbReference>
<dbReference type="InterPro" id="IPR036691">
    <property type="entry name" value="Endo/exonu/phosph_ase_sf"/>
</dbReference>
<dbReference type="InterPro" id="IPR005135">
    <property type="entry name" value="Endo/exonuclease/phosphatase"/>
</dbReference>
<dbReference type="InterPro" id="IPR027124">
    <property type="entry name" value="Swc5/CFDP1/2"/>
</dbReference>
<dbReference type="PANTHER" id="PTHR23227">
    <property type="entry name" value="BUCENTAUR RELATED"/>
    <property type="match status" value="1"/>
</dbReference>
<dbReference type="PANTHER" id="PTHR23227:SF85">
    <property type="entry name" value="CRANIOFACIAL DEVELOPMENT PROTEIN 2"/>
    <property type="match status" value="1"/>
</dbReference>
<dbReference type="Pfam" id="PF03372">
    <property type="entry name" value="Exo_endo_phos"/>
    <property type="match status" value="1"/>
</dbReference>
<dbReference type="SUPFAM" id="SSF56219">
    <property type="entry name" value="DNase I-like"/>
    <property type="match status" value="1"/>
</dbReference>
<name>CFDP2_BOVIN</name>
<gene>
    <name type="primary">CFDP2</name>
    <name type="synonym">BCNT</name>
</gene>
<protein>
    <recommendedName>
        <fullName>Craniofacial development protein 2</fullName>
    </recommendedName>
    <alternativeName>
        <fullName>p97 bucentaur protein</fullName>
    </alternativeName>
</protein>
<keyword id="KW-0963">Cytoplasm</keyword>
<keyword id="KW-0903">Direct protein sequencing</keyword>
<keyword id="KW-0539">Nucleus</keyword>
<keyword id="KW-1185">Reference proteome</keyword>
<feature type="chain" id="PRO_0000212492" description="Craniofacial development protein 2">
    <location>
        <begin position="1"/>
        <end position="592"/>
    </location>
</feature>
<feature type="region of interest" description="Disordered" evidence="1">
    <location>
        <begin position="1"/>
        <end position="225"/>
    </location>
</feature>
<feature type="region of interest" description="Disordered" evidence="1">
    <location>
        <begin position="499"/>
        <end position="592"/>
    </location>
</feature>
<feature type="region of interest" description="Hydrophilic">
    <location>
        <begin position="499"/>
        <end position="578"/>
    </location>
</feature>
<feature type="compositionally biased region" description="Basic and acidic residues" evidence="1">
    <location>
        <begin position="1"/>
        <end position="16"/>
    </location>
</feature>
<feature type="compositionally biased region" description="Acidic residues" evidence="1">
    <location>
        <begin position="25"/>
        <end position="42"/>
    </location>
</feature>
<feature type="compositionally biased region" description="Basic and acidic residues" evidence="1">
    <location>
        <begin position="78"/>
        <end position="108"/>
    </location>
</feature>
<feature type="compositionally biased region" description="Basic and acidic residues" evidence="1">
    <location>
        <begin position="147"/>
        <end position="162"/>
    </location>
</feature>
<feature type="compositionally biased region" description="Polar residues" evidence="1">
    <location>
        <begin position="175"/>
        <end position="184"/>
    </location>
</feature>
<feature type="compositionally biased region" description="Basic and acidic residues" evidence="1">
    <location>
        <begin position="185"/>
        <end position="207"/>
    </location>
</feature>
<feature type="compositionally biased region" description="Basic and acidic residues" evidence="1">
    <location>
        <begin position="508"/>
        <end position="523"/>
    </location>
</feature>
<feature type="compositionally biased region" description="Basic and acidic residues" evidence="1">
    <location>
        <begin position="552"/>
        <end position="562"/>
    </location>
</feature>
<feature type="compositionally biased region" description="Basic and acidic residues" evidence="1">
    <location>
        <begin position="580"/>
        <end position="592"/>
    </location>
</feature>
<feature type="sequence conflict" description="In Ref. 2; BAC15592." evidence="5" ref="2">
    <original>I</original>
    <variation>V</variation>
    <location>
        <position position="57"/>
    </location>
</feature>
<feature type="sequence conflict" description="In Ref. 2; BAC15592." evidence="5" ref="2">
    <original>I</original>
    <variation>V</variation>
    <location>
        <position position="86"/>
    </location>
</feature>
<feature type="sequence conflict" description="In Ref. 2; BAC15592." evidence="5" ref="2">
    <original>Q</original>
    <variation>K</variation>
    <location>
        <position position="95"/>
    </location>
</feature>
<feature type="sequence conflict" description="In Ref. 3; BAA21722." evidence="5" ref="3">
    <original>T</original>
    <variation>K</variation>
    <location>
        <position position="133"/>
    </location>
</feature>
<feature type="sequence conflict" description="In Ref. 1; BAA20065." evidence="5" ref="1">
    <original>E</original>
    <variation>K</variation>
    <location>
        <position position="187"/>
    </location>
</feature>
<feature type="sequence conflict" description="In Ref. 1; BAA20066." evidence="5" ref="1">
    <original>GV</original>
    <variation>VF</variation>
    <location>
        <begin position="195"/>
        <end position="196"/>
    </location>
</feature>
<feature type="sequence conflict" description="In Ref. 2; BAC15592." evidence="5" ref="2">
    <original>Q</original>
    <variation>P</variation>
    <location>
        <position position="219"/>
    </location>
</feature>
<feature type="sequence conflict" description="In Ref. 1; BAA20066." evidence="5" ref="1">
    <original>ETSQEA</original>
    <variation>GRGSRN</variation>
    <location>
        <begin position="545"/>
        <end position="550"/>
    </location>
</feature>
<evidence type="ECO:0000256" key="1">
    <source>
        <dbReference type="SAM" id="MobiDB-lite"/>
    </source>
</evidence>
<evidence type="ECO:0000269" key="2">
    <source>
    </source>
</evidence>
<evidence type="ECO:0000269" key="3">
    <source>
    </source>
</evidence>
<evidence type="ECO:0000269" key="4">
    <source>
    </source>
</evidence>
<evidence type="ECO:0000305" key="5"/>
<organism>
    <name type="scientific">Bos taurus</name>
    <name type="common">Bovine</name>
    <dbReference type="NCBI Taxonomy" id="9913"/>
    <lineage>
        <taxon>Eukaryota</taxon>
        <taxon>Metazoa</taxon>
        <taxon>Chordata</taxon>
        <taxon>Craniata</taxon>
        <taxon>Vertebrata</taxon>
        <taxon>Euteleostomi</taxon>
        <taxon>Mammalia</taxon>
        <taxon>Eutheria</taxon>
        <taxon>Laurasiatheria</taxon>
        <taxon>Artiodactyla</taxon>
        <taxon>Ruminantia</taxon>
        <taxon>Pecora</taxon>
        <taxon>Bovidae</taxon>
        <taxon>Bovinae</taxon>
        <taxon>Bos</taxon>
    </lineage>
</organism>
<accession>O02751</accession>
<accession>O02752</accession>
<accession>O18732</accession>
<accession>Q7JFY0</accession>
<accession>Q8I032</accession>
<proteinExistence type="evidence at protein level"/>
<reference key="1">
    <citation type="journal article" date="1997" name="J. Biol. Chem.">
        <title>An Alu-linked repetitive sequence corresponding to 280 amino acids is expressed in a novel bovine protein, but not in its human homologue.</title>
        <authorList>
            <person name="Nobukuni T."/>
            <person name="Kobayashi M."/>
            <person name="Omori A."/>
            <person name="Ichinose S."/>
            <person name="Iwanaga T."/>
            <person name="Takahashi I."/>
            <person name="Hashimoto K."/>
            <person name="Hattori S."/>
            <person name="Kaibuchi K."/>
            <person name="Miyata Y."/>
            <person name="Masui T."/>
            <person name="Iwashita S."/>
        </authorList>
    </citation>
    <scope>NUCLEOTIDE SEQUENCE [MRNA]</scope>
    <scope>PROTEIN SEQUENCE OF 8-15; 35-45; 64-74; 98-114; 133-144; 148-152; 241-247; 489-491 AND 493-500</scope>
    <scope>TISSUE SPECIFICITY</scope>
    <source>
        <tissue>Brain</tissue>
    </source>
</reference>
<reference key="2">
    <citation type="journal article" date="2003" name="Mol. Biol. Evol.">
        <title>A transposable element-mediated gene divergence that directly produces a novel type bovine Bcnt protein including the endonuclease domain of RTE-1.</title>
        <authorList>
            <person name="Iwashita S."/>
            <person name="Osada N."/>
            <person name="Itoh T."/>
            <person name="Sezaki M."/>
            <person name="Oshima K."/>
            <person name="Hashimoto E."/>
            <person name="Kitagawa-Arita Y."/>
            <person name="Takahashi I."/>
            <person name="Masui T."/>
            <person name="Hashimoto K."/>
            <person name="Makalowski W."/>
        </authorList>
    </citation>
    <scope>NUCLEOTIDE SEQUENCE [GENOMIC DNA]</scope>
    <scope>TISSUE SPECIFICITY</scope>
    <scope>GENE DUPLICATION</scope>
    <source>
        <strain>Jersey</strain>
    </source>
</reference>
<reference key="3">
    <citation type="journal article" date="1998" name="Gene">
        <title>Existence of a bovine LINE repetitive insert that appears in the cDNA of bovine protein BCNT in ruminant, but not in human, genomes.</title>
        <authorList>
            <person name="Takahashi I."/>
            <person name="Nobukuni T."/>
            <person name="Ohmori H."/>
            <person name="Kobayashi M."/>
            <person name="Tanaka S."/>
            <person name="Ohshima K."/>
            <person name="Okada N."/>
            <person name="Masui T."/>
            <person name="Hashimoto K."/>
            <person name="Iwashita S."/>
        </authorList>
    </citation>
    <scope>NUCLEOTIDE SEQUENCE [MRNA] OF 132-522</scope>
    <scope>GENE DUPLICATION</scope>
</reference>
<reference key="4">
    <citation type="journal article" date="1999" name="Biochim. Biophys. Acta">
        <title>Partial nuclear localization of a bovine phosphoprotein, BCNT, that includes a region derived from a LINE repetitive sequence in Ruminantia.</title>
        <authorList>
            <person name="Iwashita S."/>
            <person name="Nobukuni T."/>
            <person name="Tanaka S."/>
            <person name="Kobayashi M."/>
            <person name="Iwanaga T."/>
            <person name="Tamate H.B."/>
            <person name="Masui T."/>
            <person name="Takahashi I."/>
            <person name="Hashimoto K."/>
        </authorList>
    </citation>
    <scope>PHOSPHORYLATION</scope>
    <scope>SUBCELLULAR LOCATION</scope>
</reference>